<accession>P33244</accession>
<accession>B9EQU1</accession>
<accession>Q24538</accession>
<accession>Q8IQT5</accession>
<accession>Q960U2</accession>
<accession>Q9VVS8</accession>
<protein>
    <recommendedName>
        <fullName>Nuclear hormone receptor FTZ-F1</fullName>
    </recommendedName>
    <alternativeName>
        <fullName>FTZ-F1 alpha</fullName>
    </alternativeName>
    <alternativeName>
        <fullName>Nuclear receptor subfamily 5 group A member 3</fullName>
    </alternativeName>
</protein>
<reference key="1">
    <citation type="journal article" date="1991" name="Science">
        <title>FTZ-F1, a steroid hormone receptor-like protein implicated in the activation of fushi tarazu.</title>
        <authorList>
            <person name="Lavorgna G."/>
            <person name="Ueda H."/>
            <person name="Clos J."/>
            <person name="Wu C."/>
        </authorList>
    </citation>
    <scope>NUCLEOTIDE SEQUENCE [MRNA] (ISOFORM B)</scope>
    <scope>PARTIAL PROTEIN SEQUENCE</scope>
</reference>
<reference key="2">
    <citation type="journal article" date="1993" name="Proc. Natl. Acad. Sci. U.S.A.">
        <title>Potential role for a TZ-F1 steroid receptor superfamily member in the control of Drosophila metamorphosis.</title>
        <authorList>
            <person name="Lavorgna G."/>
            <person name="Karim F.D."/>
            <person name="Thummel C.S."/>
            <person name="Wu C."/>
        </authorList>
    </citation>
    <scope>NUCLEOTIDE SEQUENCE [MRNA] (ISOFORM A)</scope>
</reference>
<reference key="3">
    <citation type="journal article" date="2000" name="Science">
        <title>The genome sequence of Drosophila melanogaster.</title>
        <authorList>
            <person name="Adams M.D."/>
            <person name="Celniker S.E."/>
            <person name="Holt R.A."/>
            <person name="Evans C.A."/>
            <person name="Gocayne J.D."/>
            <person name="Amanatides P.G."/>
            <person name="Scherer S.E."/>
            <person name="Li P.W."/>
            <person name="Hoskins R.A."/>
            <person name="Galle R.F."/>
            <person name="George R.A."/>
            <person name="Lewis S.E."/>
            <person name="Richards S."/>
            <person name="Ashburner M."/>
            <person name="Henderson S.N."/>
            <person name="Sutton G.G."/>
            <person name="Wortman J.R."/>
            <person name="Yandell M.D."/>
            <person name="Zhang Q."/>
            <person name="Chen L.X."/>
            <person name="Brandon R.C."/>
            <person name="Rogers Y.-H.C."/>
            <person name="Blazej R.G."/>
            <person name="Champe M."/>
            <person name="Pfeiffer B.D."/>
            <person name="Wan K.H."/>
            <person name="Doyle C."/>
            <person name="Baxter E.G."/>
            <person name="Helt G."/>
            <person name="Nelson C.R."/>
            <person name="Miklos G.L.G."/>
            <person name="Abril J.F."/>
            <person name="Agbayani A."/>
            <person name="An H.-J."/>
            <person name="Andrews-Pfannkoch C."/>
            <person name="Baldwin D."/>
            <person name="Ballew R.M."/>
            <person name="Basu A."/>
            <person name="Baxendale J."/>
            <person name="Bayraktaroglu L."/>
            <person name="Beasley E.M."/>
            <person name="Beeson K.Y."/>
            <person name="Benos P.V."/>
            <person name="Berman B.P."/>
            <person name="Bhandari D."/>
            <person name="Bolshakov S."/>
            <person name="Borkova D."/>
            <person name="Botchan M.R."/>
            <person name="Bouck J."/>
            <person name="Brokstein P."/>
            <person name="Brottier P."/>
            <person name="Burtis K.C."/>
            <person name="Busam D.A."/>
            <person name="Butler H."/>
            <person name="Cadieu E."/>
            <person name="Center A."/>
            <person name="Chandra I."/>
            <person name="Cherry J.M."/>
            <person name="Cawley S."/>
            <person name="Dahlke C."/>
            <person name="Davenport L.B."/>
            <person name="Davies P."/>
            <person name="de Pablos B."/>
            <person name="Delcher A."/>
            <person name="Deng Z."/>
            <person name="Mays A.D."/>
            <person name="Dew I."/>
            <person name="Dietz S.M."/>
            <person name="Dodson K."/>
            <person name="Doup L.E."/>
            <person name="Downes M."/>
            <person name="Dugan-Rocha S."/>
            <person name="Dunkov B.C."/>
            <person name="Dunn P."/>
            <person name="Durbin K.J."/>
            <person name="Evangelista C.C."/>
            <person name="Ferraz C."/>
            <person name="Ferriera S."/>
            <person name="Fleischmann W."/>
            <person name="Fosler C."/>
            <person name="Gabrielian A.E."/>
            <person name="Garg N.S."/>
            <person name="Gelbart W.M."/>
            <person name="Glasser K."/>
            <person name="Glodek A."/>
            <person name="Gong F."/>
            <person name="Gorrell J.H."/>
            <person name="Gu Z."/>
            <person name="Guan P."/>
            <person name="Harris M."/>
            <person name="Harris N.L."/>
            <person name="Harvey D.A."/>
            <person name="Heiman T.J."/>
            <person name="Hernandez J.R."/>
            <person name="Houck J."/>
            <person name="Hostin D."/>
            <person name="Houston K.A."/>
            <person name="Howland T.J."/>
            <person name="Wei M.-H."/>
            <person name="Ibegwam C."/>
            <person name="Jalali M."/>
            <person name="Kalush F."/>
            <person name="Karpen G.H."/>
            <person name="Ke Z."/>
            <person name="Kennison J.A."/>
            <person name="Ketchum K.A."/>
            <person name="Kimmel B.E."/>
            <person name="Kodira C.D."/>
            <person name="Kraft C.L."/>
            <person name="Kravitz S."/>
            <person name="Kulp D."/>
            <person name="Lai Z."/>
            <person name="Lasko P."/>
            <person name="Lei Y."/>
            <person name="Levitsky A.A."/>
            <person name="Li J.H."/>
            <person name="Li Z."/>
            <person name="Liang Y."/>
            <person name="Lin X."/>
            <person name="Liu X."/>
            <person name="Mattei B."/>
            <person name="McIntosh T.C."/>
            <person name="McLeod M.P."/>
            <person name="McPherson D."/>
            <person name="Merkulov G."/>
            <person name="Milshina N.V."/>
            <person name="Mobarry C."/>
            <person name="Morris J."/>
            <person name="Moshrefi A."/>
            <person name="Mount S.M."/>
            <person name="Moy M."/>
            <person name="Murphy B."/>
            <person name="Murphy L."/>
            <person name="Muzny D.M."/>
            <person name="Nelson D.L."/>
            <person name="Nelson D.R."/>
            <person name="Nelson K.A."/>
            <person name="Nixon K."/>
            <person name="Nusskern D.R."/>
            <person name="Pacleb J.M."/>
            <person name="Palazzolo M."/>
            <person name="Pittman G.S."/>
            <person name="Pan S."/>
            <person name="Pollard J."/>
            <person name="Puri V."/>
            <person name="Reese M.G."/>
            <person name="Reinert K."/>
            <person name="Remington K."/>
            <person name="Saunders R.D.C."/>
            <person name="Scheeler F."/>
            <person name="Shen H."/>
            <person name="Shue B.C."/>
            <person name="Siden-Kiamos I."/>
            <person name="Simpson M."/>
            <person name="Skupski M.P."/>
            <person name="Smith T.J."/>
            <person name="Spier E."/>
            <person name="Spradling A.C."/>
            <person name="Stapleton M."/>
            <person name="Strong R."/>
            <person name="Sun E."/>
            <person name="Svirskas R."/>
            <person name="Tector C."/>
            <person name="Turner R."/>
            <person name="Venter E."/>
            <person name="Wang A.H."/>
            <person name="Wang X."/>
            <person name="Wang Z.-Y."/>
            <person name="Wassarman D.A."/>
            <person name="Weinstock G.M."/>
            <person name="Weissenbach J."/>
            <person name="Williams S.M."/>
            <person name="Woodage T."/>
            <person name="Worley K.C."/>
            <person name="Wu D."/>
            <person name="Yang S."/>
            <person name="Yao Q.A."/>
            <person name="Ye J."/>
            <person name="Yeh R.-F."/>
            <person name="Zaveri J.S."/>
            <person name="Zhan M."/>
            <person name="Zhang G."/>
            <person name="Zhao Q."/>
            <person name="Zheng L."/>
            <person name="Zheng X.H."/>
            <person name="Zhong F.N."/>
            <person name="Zhong W."/>
            <person name="Zhou X."/>
            <person name="Zhu S.C."/>
            <person name="Zhu X."/>
            <person name="Smith H.O."/>
            <person name="Gibbs R.A."/>
            <person name="Myers E.W."/>
            <person name="Rubin G.M."/>
            <person name="Venter J.C."/>
        </authorList>
    </citation>
    <scope>NUCLEOTIDE SEQUENCE [LARGE SCALE GENOMIC DNA]</scope>
    <source>
        <strain>Berkeley</strain>
    </source>
</reference>
<reference key="4">
    <citation type="journal article" date="2002" name="Genome Biol.">
        <title>Annotation of the Drosophila melanogaster euchromatic genome: a systematic review.</title>
        <authorList>
            <person name="Misra S."/>
            <person name="Crosby M.A."/>
            <person name="Mungall C.J."/>
            <person name="Matthews B.B."/>
            <person name="Campbell K.S."/>
            <person name="Hradecky P."/>
            <person name="Huang Y."/>
            <person name="Kaminker J.S."/>
            <person name="Millburn G.H."/>
            <person name="Prochnik S.E."/>
            <person name="Smith C.D."/>
            <person name="Tupy J.L."/>
            <person name="Whitfield E.J."/>
            <person name="Bayraktaroglu L."/>
            <person name="Berman B.P."/>
            <person name="Bettencourt B.R."/>
            <person name="Celniker S.E."/>
            <person name="de Grey A.D.N.J."/>
            <person name="Drysdale R.A."/>
            <person name="Harris N.L."/>
            <person name="Richter J."/>
            <person name="Russo S."/>
            <person name="Schroeder A.J."/>
            <person name="Shu S.Q."/>
            <person name="Stapleton M."/>
            <person name="Yamada C."/>
            <person name="Ashburner M."/>
            <person name="Gelbart W.M."/>
            <person name="Rubin G.M."/>
            <person name="Lewis S.E."/>
        </authorList>
    </citation>
    <scope>GENOME REANNOTATION</scope>
    <scope>ALTERNATIVE SPLICING</scope>
    <source>
        <strain>Berkeley</strain>
    </source>
</reference>
<reference key="5">
    <citation type="submission" date="2009-01" db="EMBL/GenBank/DDBJ databases">
        <authorList>
            <person name="Carlson J.W."/>
            <person name="Booth B."/>
            <person name="Frise E."/>
            <person name="Park S."/>
            <person name="Wan K.H."/>
            <person name="Yu C."/>
            <person name="Celniker S.E."/>
        </authorList>
    </citation>
    <scope>NUCLEOTIDE SEQUENCE [LARGE SCALE MRNA]</scope>
    <source>
        <strain>Berkeley</strain>
        <tissue>Embryo</tissue>
    </source>
</reference>
<reference key="6">
    <citation type="journal article" date="2002" name="Genome Biol.">
        <title>A Drosophila full-length cDNA resource.</title>
        <authorList>
            <person name="Stapleton M."/>
            <person name="Carlson J.W."/>
            <person name="Brokstein P."/>
            <person name="Yu C."/>
            <person name="Champe M."/>
            <person name="George R.A."/>
            <person name="Guarin H."/>
            <person name="Kronmiller B."/>
            <person name="Pacleb J.M."/>
            <person name="Park S."/>
            <person name="Wan K.H."/>
            <person name="Rubin G.M."/>
            <person name="Celniker S.E."/>
        </authorList>
    </citation>
    <scope>NUCLEOTIDE SEQUENCE [LARGE SCALE MRNA] OF 601-1027</scope>
    <source>
        <strain>Berkeley</strain>
        <tissue>Embryo</tissue>
    </source>
</reference>
<reference key="7">
    <citation type="journal article" date="1992" name="Mol. Cell. Biol.">
        <title>A novel DNA-binding motif abuts the zinc finger domain of insect nuclear hormone receptor FTZ-F1 and mouse embryonal long terminal repeat-binding protein.</title>
        <authorList>
            <person name="Ueda H."/>
            <person name="Sun G.-C."/>
            <person name="Murata T."/>
            <person name="Hirose S."/>
        </authorList>
    </citation>
    <scope>DNA-BINDING</scope>
    <scope>SUBUNIT</scope>
    <scope>MUTAGENESIS OF CYS-563; ARG-579; ARG-582; MET-583; ARG-584; 585-GLY--GLY-586; ARG-587 AND LYS-589</scope>
</reference>
<reference key="8">
    <citation type="journal article" date="1994" name="Mol. Cell. Biol.">
        <title>The Drosophila nuclear receptors FTZ-F1 alpha and FTZ-F1 beta compete as monomers for binding to a site in the fushi tarazu gene.</title>
        <authorList>
            <person name="Ohno C.K."/>
            <person name="Ueda H."/>
            <person name="Petkovich M."/>
        </authorList>
    </citation>
    <scope>DNA-BINDING</scope>
    <scope>SUBUNIT</scope>
</reference>
<reference key="9">
    <citation type="journal article" date="1997" name="Nature">
        <title>The nuclear receptor homologue Ftz-F1 and the homeodomain protein Ftz are mutually dependent cofactors.</title>
        <authorList>
            <person name="Guichet A."/>
            <person name="Copeland J.W.R."/>
            <person name="Erdelyi M."/>
            <person name="Hlousek D."/>
            <person name="Zavorszky P."/>
            <person name="Ho J."/>
            <person name="Brown S."/>
            <person name="Percival-Smith A."/>
            <person name="Krause H.M."/>
            <person name="Ephrussi A."/>
        </authorList>
    </citation>
    <scope>FUNCTION</scope>
    <scope>SUBUNIT</scope>
    <scope>TISSUE SPECIFICITY</scope>
    <scope>DEVELOPMENTAL STAGE</scope>
</reference>
<reference key="10">
    <citation type="journal article" date="1997" name="Nature">
        <title>The nuclear hormone receptor Ftz-F1 is a cofactor for the Drosophila homeodomain protein Ftz.</title>
        <authorList>
            <person name="Yu Y."/>
            <person name="Li W."/>
            <person name="Su K."/>
            <person name="Yussa M."/>
            <person name="Han W."/>
            <person name="Perrimon N."/>
            <person name="Pick L."/>
        </authorList>
    </citation>
    <scope>FUNCTION</scope>
    <scope>SUBUNIT</scope>
    <scope>DISRUPTION PHENOTYPE</scope>
</reference>
<reference key="11">
    <citation type="journal article" date="2013" name="J. Biol. Chem.">
        <title>Divergent sequence tunes ligand sensitivity in phospholipid-regulated hormone receptors.</title>
        <authorList>
            <person name="Musille P.M."/>
            <person name="Pathak M."/>
            <person name="Lauer J.L."/>
            <person name="Griffin P.R."/>
            <person name="Ortlund E.A."/>
        </authorList>
    </citation>
    <scope>FUNCTION</scope>
</reference>
<gene>
    <name type="primary">ftz-f1</name>
    <name type="synonym">NR5A3</name>
    <name type="ORF">CG4059</name>
</gene>
<organism>
    <name type="scientific">Drosophila melanogaster</name>
    <name type="common">Fruit fly</name>
    <dbReference type="NCBI Taxonomy" id="7227"/>
    <lineage>
        <taxon>Eukaryota</taxon>
        <taxon>Metazoa</taxon>
        <taxon>Ecdysozoa</taxon>
        <taxon>Arthropoda</taxon>
        <taxon>Hexapoda</taxon>
        <taxon>Insecta</taxon>
        <taxon>Pterygota</taxon>
        <taxon>Neoptera</taxon>
        <taxon>Endopterygota</taxon>
        <taxon>Diptera</taxon>
        <taxon>Brachycera</taxon>
        <taxon>Muscomorpha</taxon>
        <taxon>Ephydroidea</taxon>
        <taxon>Drosophilidae</taxon>
        <taxon>Drosophila</taxon>
        <taxon>Sophophora</taxon>
    </lineage>
</organism>
<name>FTZF1_DROME</name>
<dbReference type="EMBL" id="M63711">
    <property type="protein sequence ID" value="AAA28542.1"/>
    <property type="status" value="ALT_FRAME"/>
    <property type="molecule type" value="mRNA"/>
</dbReference>
<dbReference type="EMBL" id="M98397">
    <property type="protein sequence ID" value="AAA28915.1"/>
    <property type="status" value="ALT_FRAME"/>
    <property type="molecule type" value="mRNA"/>
</dbReference>
<dbReference type="EMBL" id="AE014296">
    <property type="protein sequence ID" value="AAF49231.2"/>
    <property type="molecule type" value="Genomic_DNA"/>
</dbReference>
<dbReference type="EMBL" id="AE014296">
    <property type="protein sequence ID" value="AAN11667.1"/>
    <property type="molecule type" value="Genomic_DNA"/>
</dbReference>
<dbReference type="EMBL" id="BT058016">
    <property type="protein sequence ID" value="ACM16732.1"/>
    <property type="molecule type" value="mRNA"/>
</dbReference>
<dbReference type="EMBL" id="AY051845">
    <property type="protein sequence ID" value="AAK93269.1"/>
    <property type="status" value="ALT_INIT"/>
    <property type="molecule type" value="mRNA"/>
</dbReference>
<dbReference type="PIR" id="A47303">
    <property type="entry name" value="A47303"/>
</dbReference>
<dbReference type="PIR" id="T13733">
    <property type="entry name" value="T13733"/>
</dbReference>
<dbReference type="RefSeq" id="NP_001246824.1">
    <molecule id="P33244-2"/>
    <property type="nucleotide sequence ID" value="NM_001259895.2"/>
</dbReference>
<dbReference type="RefSeq" id="NP_524143.2">
    <molecule id="P33244-1"/>
    <property type="nucleotide sequence ID" value="NM_079419.3"/>
</dbReference>
<dbReference type="RefSeq" id="NP_730359.1">
    <molecule id="P33244-2"/>
    <property type="nucleotide sequence ID" value="NM_168775.2"/>
</dbReference>
<dbReference type="PDB" id="2XHS">
    <property type="method" value="X-ray"/>
    <property type="resolution" value="2.80 A"/>
    <property type="chains" value="A=790-1027"/>
</dbReference>
<dbReference type="PDBsum" id="2XHS"/>
<dbReference type="SMR" id="P33244"/>
<dbReference type="BioGRID" id="65326">
    <property type="interactions" value="46"/>
</dbReference>
<dbReference type="FunCoup" id="P33244">
    <property type="interactions" value="837"/>
</dbReference>
<dbReference type="IntAct" id="P33244">
    <property type="interactions" value="7"/>
</dbReference>
<dbReference type="STRING" id="7227.FBpp0074853"/>
<dbReference type="GlyGen" id="P33244">
    <property type="glycosylation" value="1 site"/>
</dbReference>
<dbReference type="PaxDb" id="7227-FBpp0074853"/>
<dbReference type="DNASU" id="40045"/>
<dbReference type="EnsemblMetazoa" id="FBtr0075086">
    <molecule id="P33244-1"/>
    <property type="protein sequence ID" value="FBpp0074853"/>
    <property type="gene ID" value="FBgn0001078"/>
</dbReference>
<dbReference type="EnsemblMetazoa" id="FBtr0075087">
    <molecule id="P33244-2"/>
    <property type="protein sequence ID" value="FBpp0074854"/>
    <property type="gene ID" value="FBgn0001078"/>
</dbReference>
<dbReference type="EnsemblMetazoa" id="FBtr0304627">
    <molecule id="P33244-2"/>
    <property type="protein sequence ID" value="FBpp0293169"/>
    <property type="gene ID" value="FBgn0001078"/>
</dbReference>
<dbReference type="GeneID" id="40045"/>
<dbReference type="KEGG" id="dme:Dmel_CG4059"/>
<dbReference type="AGR" id="FB:FBgn0001078"/>
<dbReference type="CTD" id="40045"/>
<dbReference type="FlyBase" id="FBgn0001078">
    <property type="gene designation" value="ftz-f1"/>
</dbReference>
<dbReference type="VEuPathDB" id="VectorBase:FBgn0001078"/>
<dbReference type="eggNOG" id="KOG4218">
    <property type="taxonomic scope" value="Eukaryota"/>
</dbReference>
<dbReference type="GeneTree" id="ENSGT00940000153391"/>
<dbReference type="HOGENOM" id="CLU_011437_2_0_1"/>
<dbReference type="InParanoid" id="P33244"/>
<dbReference type="OrthoDB" id="6355676at2759"/>
<dbReference type="PhylomeDB" id="P33244"/>
<dbReference type="Reactome" id="R-DME-383280">
    <property type="pathway name" value="Nuclear Receptor transcription pathway"/>
</dbReference>
<dbReference type="Reactome" id="R-DME-4090294">
    <property type="pathway name" value="SUMOylation of intracellular receptors"/>
</dbReference>
<dbReference type="SignaLink" id="P33244"/>
<dbReference type="BioGRID-ORCS" id="40045">
    <property type="hits" value="1 hit in 3 CRISPR screens"/>
</dbReference>
<dbReference type="ChiTaRS" id="ftz-f1">
    <property type="organism name" value="fly"/>
</dbReference>
<dbReference type="EvolutionaryTrace" id="P33244"/>
<dbReference type="GenomeRNAi" id="40045"/>
<dbReference type="PRO" id="PR:P33244"/>
<dbReference type="Proteomes" id="UP000000803">
    <property type="component" value="Chromosome 3L"/>
</dbReference>
<dbReference type="Bgee" id="FBgn0001078">
    <property type="expression patterns" value="Expressed in adult Malpighian tubule stellate cell of main segment in Malpighian tubule and 285 other cell types or tissues"/>
</dbReference>
<dbReference type="ExpressionAtlas" id="P33244">
    <property type="expression patterns" value="baseline and differential"/>
</dbReference>
<dbReference type="GO" id="GO:0005737">
    <property type="term" value="C:cytoplasm"/>
    <property type="evidence" value="ECO:0000303"/>
    <property type="project" value="FlyBase"/>
</dbReference>
<dbReference type="GO" id="GO:0005634">
    <property type="term" value="C:nucleus"/>
    <property type="evidence" value="ECO:0000314"/>
    <property type="project" value="FlyBase"/>
</dbReference>
<dbReference type="GO" id="GO:0090575">
    <property type="term" value="C:RNA polymerase II transcription regulator complex"/>
    <property type="evidence" value="ECO:0000318"/>
    <property type="project" value="GO_Central"/>
</dbReference>
<dbReference type="GO" id="GO:0003677">
    <property type="term" value="F:DNA binding"/>
    <property type="evidence" value="ECO:0000314"/>
    <property type="project" value="FlyBase"/>
</dbReference>
<dbReference type="GO" id="GO:0001228">
    <property type="term" value="F:DNA-binding transcription activator activity, RNA polymerase II-specific"/>
    <property type="evidence" value="ECO:0000314"/>
    <property type="project" value="FlyBase"/>
</dbReference>
<dbReference type="GO" id="GO:0004879">
    <property type="term" value="F:nuclear receptor activity"/>
    <property type="evidence" value="ECO:0000303"/>
    <property type="project" value="FlyBase"/>
</dbReference>
<dbReference type="GO" id="GO:0000978">
    <property type="term" value="F:RNA polymerase II cis-regulatory region sequence-specific DNA binding"/>
    <property type="evidence" value="ECO:0000318"/>
    <property type="project" value="GO_Central"/>
</dbReference>
<dbReference type="GO" id="GO:0061629">
    <property type="term" value="F:RNA polymerase II-specific DNA-binding transcription factor binding"/>
    <property type="evidence" value="ECO:0000353"/>
    <property type="project" value="FlyBase"/>
</dbReference>
<dbReference type="GO" id="GO:0000976">
    <property type="term" value="F:transcription cis-regulatory region binding"/>
    <property type="evidence" value="ECO:0000314"/>
    <property type="project" value="FlyBase"/>
</dbReference>
<dbReference type="GO" id="GO:0008270">
    <property type="term" value="F:zinc ion binding"/>
    <property type="evidence" value="ECO:0007669"/>
    <property type="project" value="UniProtKB-KW"/>
</dbReference>
<dbReference type="GO" id="GO:0048813">
    <property type="term" value="P:dendrite morphogenesis"/>
    <property type="evidence" value="ECO:0000315"/>
    <property type="project" value="FlyBase"/>
</dbReference>
<dbReference type="GO" id="GO:0009755">
    <property type="term" value="P:hormone-mediated signaling pathway"/>
    <property type="evidence" value="ECO:0000318"/>
    <property type="project" value="GO_Central"/>
</dbReference>
<dbReference type="GO" id="GO:0007480">
    <property type="term" value="P:imaginal disc-derived leg morphogenesis"/>
    <property type="evidence" value="ECO:0000315"/>
    <property type="project" value="FlyBase"/>
</dbReference>
<dbReference type="GO" id="GO:0002165">
    <property type="term" value="P:instar larval or pupal development"/>
    <property type="evidence" value="ECO:0000315"/>
    <property type="project" value="FlyBase"/>
</dbReference>
<dbReference type="GO" id="GO:0035626">
    <property type="term" value="P:juvenile hormone mediated signaling pathway"/>
    <property type="evidence" value="ECO:0000315"/>
    <property type="project" value="FlyBase"/>
</dbReference>
<dbReference type="GO" id="GO:0055088">
    <property type="term" value="P:lipid homeostasis"/>
    <property type="evidence" value="ECO:0000315"/>
    <property type="project" value="FlyBase"/>
</dbReference>
<dbReference type="GO" id="GO:0007552">
    <property type="term" value="P:metamorphosis"/>
    <property type="evidence" value="ECO:0000315"/>
    <property type="project" value="FlyBase"/>
</dbReference>
<dbReference type="GO" id="GO:0016319">
    <property type="term" value="P:mushroom body development"/>
    <property type="evidence" value="ECO:0000315"/>
    <property type="project" value="FlyBase"/>
</dbReference>
<dbReference type="GO" id="GO:0016322">
    <property type="term" value="P:neuron remodeling"/>
    <property type="evidence" value="ECO:0000315"/>
    <property type="project" value="FlyBase"/>
</dbReference>
<dbReference type="GO" id="GO:0045944">
    <property type="term" value="P:positive regulation of transcription by RNA polymerase II"/>
    <property type="evidence" value="ECO:0000315"/>
    <property type="project" value="FlyBase"/>
</dbReference>
<dbReference type="GO" id="GO:0035073">
    <property type="term" value="P:pupariation"/>
    <property type="evidence" value="ECO:0000315"/>
    <property type="project" value="FlyBase"/>
</dbReference>
<dbReference type="GO" id="GO:0035074">
    <property type="term" value="P:pupation"/>
    <property type="evidence" value="ECO:0000315"/>
    <property type="project" value="FlyBase"/>
</dbReference>
<dbReference type="GO" id="GO:0040034">
    <property type="term" value="P:regulation of development, heterochronic"/>
    <property type="evidence" value="ECO:0000304"/>
    <property type="project" value="FlyBase"/>
</dbReference>
<dbReference type="GO" id="GO:0006355">
    <property type="term" value="P:regulation of DNA-templated transcription"/>
    <property type="evidence" value="ECO:0000315"/>
    <property type="project" value="FlyBase"/>
</dbReference>
<dbReference type="GO" id="GO:0006357">
    <property type="term" value="P:regulation of transcription by RNA polymerase II"/>
    <property type="evidence" value="ECO:0000314"/>
    <property type="project" value="FlyBase"/>
</dbReference>
<dbReference type="GO" id="GO:0035075">
    <property type="term" value="P:response to ecdysone"/>
    <property type="evidence" value="ECO:0000304"/>
    <property type="project" value="FlyBase"/>
</dbReference>
<dbReference type="GO" id="GO:0009888">
    <property type="term" value="P:tissue development"/>
    <property type="evidence" value="ECO:0000318"/>
    <property type="project" value="GO_Central"/>
</dbReference>
<dbReference type="CDD" id="cd07167">
    <property type="entry name" value="NR_DBD_Lrh-1_like"/>
    <property type="match status" value="1"/>
</dbReference>
<dbReference type="CDD" id="cd06944">
    <property type="entry name" value="NR_LBD_Ftz-F1_like"/>
    <property type="match status" value="1"/>
</dbReference>
<dbReference type="FunFam" id="1.10.565.10:FF:000032">
    <property type="entry name" value="Nuclear hormone receptor FTZ-F1"/>
    <property type="match status" value="1"/>
</dbReference>
<dbReference type="FunFam" id="3.30.50.10:FF:000006">
    <property type="entry name" value="Nuclear receptor subfamily 5 group A member"/>
    <property type="match status" value="1"/>
</dbReference>
<dbReference type="Gene3D" id="3.30.50.10">
    <property type="entry name" value="Erythroid Transcription Factor GATA-1, subunit A"/>
    <property type="match status" value="1"/>
</dbReference>
<dbReference type="Gene3D" id="1.10.565.10">
    <property type="entry name" value="Retinoid X Receptor"/>
    <property type="match status" value="1"/>
</dbReference>
<dbReference type="IDEAL" id="IID50244"/>
<dbReference type="InterPro" id="IPR035500">
    <property type="entry name" value="NHR-like_dom_sf"/>
</dbReference>
<dbReference type="InterPro" id="IPR016355">
    <property type="entry name" value="NR5-like"/>
</dbReference>
<dbReference type="InterPro" id="IPR000536">
    <property type="entry name" value="Nucl_hrmn_rcpt_lig-bd"/>
</dbReference>
<dbReference type="InterPro" id="IPR001723">
    <property type="entry name" value="Nuclear_hrmn_rcpt"/>
</dbReference>
<dbReference type="InterPro" id="IPR001628">
    <property type="entry name" value="Znf_hrmn_rcpt"/>
</dbReference>
<dbReference type="InterPro" id="IPR013088">
    <property type="entry name" value="Znf_NHR/GATA"/>
</dbReference>
<dbReference type="PANTHER" id="PTHR24086:SF15">
    <property type="entry name" value="NUCLEAR HORMONE RECEPTOR FTZ-F1"/>
    <property type="match status" value="1"/>
</dbReference>
<dbReference type="PANTHER" id="PTHR24086">
    <property type="entry name" value="NUCLEAR RECEPTOR SUBFAMILY 5 GROUP A"/>
    <property type="match status" value="1"/>
</dbReference>
<dbReference type="Pfam" id="PF00104">
    <property type="entry name" value="Hormone_recep"/>
    <property type="match status" value="1"/>
</dbReference>
<dbReference type="Pfam" id="PF00105">
    <property type="entry name" value="zf-C4"/>
    <property type="match status" value="1"/>
</dbReference>
<dbReference type="PRINTS" id="PR00398">
    <property type="entry name" value="STRDHORMONER"/>
</dbReference>
<dbReference type="PRINTS" id="PR00047">
    <property type="entry name" value="STROIDFINGER"/>
</dbReference>
<dbReference type="SMART" id="SM00430">
    <property type="entry name" value="HOLI"/>
    <property type="match status" value="1"/>
</dbReference>
<dbReference type="SMART" id="SM00399">
    <property type="entry name" value="ZnF_C4"/>
    <property type="match status" value="1"/>
</dbReference>
<dbReference type="SUPFAM" id="SSF57716">
    <property type="entry name" value="Glucocorticoid receptor-like (DNA-binding domain)"/>
    <property type="match status" value="1"/>
</dbReference>
<dbReference type="SUPFAM" id="SSF48508">
    <property type="entry name" value="Nuclear receptor ligand-binding domain"/>
    <property type="match status" value="1"/>
</dbReference>
<dbReference type="PROSITE" id="PS51843">
    <property type="entry name" value="NR_LBD"/>
    <property type="match status" value="1"/>
</dbReference>
<dbReference type="PROSITE" id="PS00031">
    <property type="entry name" value="NUCLEAR_REC_DBD_1"/>
    <property type="match status" value="1"/>
</dbReference>
<dbReference type="PROSITE" id="PS51030">
    <property type="entry name" value="NUCLEAR_REC_DBD_2"/>
    <property type="match status" value="1"/>
</dbReference>
<comment type="function">
    <text evidence="5 7 8">Acts as a cofactor to fushi tarazu (ftz) (PubMed:9020363, PubMed:9020364). Facilitates the binding of ftz to DNA (PubMed:9020363, PubMed:9020364). Binds the sequence element 5'-YCYYGGYCR-3' in the zebra element of ftz (PubMed:9020363, PubMed:9020364). Probably functions as a nuclear receptor for a yet unknown ligand (PubMed:23737522, PubMed:9020363, PubMed:9020364). In contrast to vertebrate homologs, not activated by phospholipids (PubMed:23737522).</text>
</comment>
<comment type="subunit">
    <text evidence="4 6 7 8">Monomer; forms a complex with ftz.</text>
</comment>
<comment type="interaction">
    <interactant intactId="EBI-160447">
        <id>P33244</id>
    </interactant>
    <interactant intactId="EBI-125786">
        <id>P02835</id>
        <label>ftz</label>
    </interactant>
    <organismsDiffer>false</organismsDiffer>
    <experiments>3</experiments>
</comment>
<comment type="subcellular location">
    <subcellularLocation>
        <location>Nucleus</location>
    </subcellularLocation>
</comment>
<comment type="alternative products">
    <event type="alternative splicing"/>
    <isoform>
        <id>P33244-1</id>
        <name>B</name>
        <sequence type="displayed"/>
    </isoform>
    <isoform>
        <id>P33244-2</id>
        <name>A</name>
        <sequence type="described" ref="VSP_012917 VSP_012918"/>
    </isoform>
</comment>
<comment type="tissue specificity">
    <text evidence="7">Expression in the parasegmental primordia of the embryonic blastoderm.</text>
</comment>
<comment type="developmental stage">
    <text evidence="7">First appears in blastoderm embryos. It is absent in subsequent embryo stages, and then reappears in late embryogenesis to be found in larvae, pupae and adults.</text>
</comment>
<comment type="disruption phenotype">
    <text evidence="8">Ftz-like pair-rule cuticular defects.</text>
</comment>
<comment type="similarity">
    <text evidence="10">Belongs to the nuclear hormone receptor family. NR5 subfamily.</text>
</comment>
<comment type="sequence caution" evidence="10">
    <conflict type="frameshift">
        <sequence resource="EMBL-CDS" id="AAA28542"/>
    </conflict>
</comment>
<comment type="sequence caution" evidence="10">
    <conflict type="frameshift">
        <sequence resource="EMBL-CDS" id="AAA28915"/>
    </conflict>
</comment>
<comment type="sequence caution" evidence="10">
    <conflict type="erroneous initiation">
        <sequence resource="EMBL-CDS" id="AAK93269"/>
    </conflict>
</comment>
<evidence type="ECO:0000255" key="1">
    <source>
        <dbReference type="PROSITE-ProRule" id="PRU00407"/>
    </source>
</evidence>
<evidence type="ECO:0000255" key="2">
    <source>
        <dbReference type="PROSITE-ProRule" id="PRU01189"/>
    </source>
</evidence>
<evidence type="ECO:0000256" key="3">
    <source>
        <dbReference type="SAM" id="MobiDB-lite"/>
    </source>
</evidence>
<evidence type="ECO:0000269" key="4">
    <source>
    </source>
</evidence>
<evidence type="ECO:0000269" key="5">
    <source>
    </source>
</evidence>
<evidence type="ECO:0000269" key="6">
    <source>
    </source>
</evidence>
<evidence type="ECO:0000269" key="7">
    <source>
    </source>
</evidence>
<evidence type="ECO:0000269" key="8">
    <source>
    </source>
</evidence>
<evidence type="ECO:0000303" key="9">
    <source>
    </source>
</evidence>
<evidence type="ECO:0000305" key="10"/>
<evidence type="ECO:0007829" key="11">
    <source>
        <dbReference type="PDB" id="2XHS"/>
    </source>
</evidence>
<proteinExistence type="evidence at protein level"/>
<feature type="chain" id="PRO_0000053739" description="Nuclear hormone receptor FTZ-F1">
    <location>
        <begin position="1"/>
        <end position="1027"/>
    </location>
</feature>
<feature type="domain" description="NR LBD" evidence="2">
    <location>
        <begin position="792"/>
        <end position="1024"/>
    </location>
</feature>
<feature type="DNA-binding region" description="Nuclear receptor" evidence="1">
    <location>
        <begin position="505"/>
        <end position="580"/>
    </location>
</feature>
<feature type="zinc finger region" description="NR C4-type" evidence="1">
    <location>
        <begin position="508"/>
        <end position="528"/>
    </location>
</feature>
<feature type="zinc finger region" description="NR C4-type" evidence="1">
    <location>
        <begin position="544"/>
        <end position="568"/>
    </location>
</feature>
<feature type="region of interest" description="Disordered" evidence="3">
    <location>
        <begin position="20"/>
        <end position="48"/>
    </location>
</feature>
<feature type="region of interest" description="Disordered" evidence="3">
    <location>
        <begin position="273"/>
        <end position="427"/>
    </location>
</feature>
<feature type="region of interest" description="Disordered" evidence="3">
    <location>
        <begin position="443"/>
        <end position="493"/>
    </location>
</feature>
<feature type="region of interest" description="Disordered" evidence="3">
    <location>
        <begin position="682"/>
        <end position="756"/>
    </location>
</feature>
<feature type="compositionally biased region" description="Basic residues" evidence="3">
    <location>
        <begin position="24"/>
        <end position="35"/>
    </location>
</feature>
<feature type="compositionally biased region" description="Low complexity" evidence="3">
    <location>
        <begin position="36"/>
        <end position="48"/>
    </location>
</feature>
<feature type="compositionally biased region" description="Gly residues" evidence="3">
    <location>
        <begin position="283"/>
        <end position="299"/>
    </location>
</feature>
<feature type="compositionally biased region" description="Low complexity" evidence="3">
    <location>
        <begin position="300"/>
        <end position="324"/>
    </location>
</feature>
<feature type="compositionally biased region" description="Low complexity" evidence="3">
    <location>
        <begin position="335"/>
        <end position="349"/>
    </location>
</feature>
<feature type="compositionally biased region" description="Acidic residues" evidence="3">
    <location>
        <begin position="380"/>
        <end position="396"/>
    </location>
</feature>
<feature type="compositionally biased region" description="Gly residues" evidence="3">
    <location>
        <begin position="411"/>
        <end position="427"/>
    </location>
</feature>
<feature type="compositionally biased region" description="Low complexity" evidence="3">
    <location>
        <begin position="443"/>
        <end position="461"/>
    </location>
</feature>
<feature type="compositionally biased region" description="Gly residues" evidence="3">
    <location>
        <begin position="462"/>
        <end position="484"/>
    </location>
</feature>
<feature type="compositionally biased region" description="Gly residues" evidence="3">
    <location>
        <begin position="686"/>
        <end position="696"/>
    </location>
</feature>
<feature type="compositionally biased region" description="Low complexity" evidence="3">
    <location>
        <begin position="697"/>
        <end position="721"/>
    </location>
</feature>
<feature type="compositionally biased region" description="Gly residues" evidence="3">
    <location>
        <begin position="722"/>
        <end position="739"/>
    </location>
</feature>
<feature type="splice variant" id="VSP_012917" description="In isoform A." evidence="9">
    <original>MDTFNVPMLAESSNTNYATEATSNHHHLQHQHQQQHSHQQQQQQQLLMPHHHKDQMLAAGSSPMLPFYSHLQLQQKDATATIGPAAAAAAVEAATTSANADNFSSLQTIDASQLDGGISLSGLCDRFFVASPNPHSNSNMTLMGTATAATTTTTNNNNNNNTNNNNNNNVEAKT</original>
    <variation>MLLEMDQQQATVQFISSLNISPFSMQLEQQQQPSSPALAAGGNSSNNAASGSNNNSASGNNTSSSSNNNNNNNNDNDAHVLTKFEHEYNAYTLQLAGGGGSGSGNQQHHSNHSNHGNHHQQQQQQQQQQQQHQQQQQEHYQQQQQQNIANNANQFNSSSYSYIYNFDSQYIFPT</variation>
    <location>
        <begin position="1"/>
        <end position="174"/>
    </location>
</feature>
<feature type="splice variant" id="VSP_012918" description="In isoform A." evidence="9">
    <location>
        <begin position="175"/>
        <end position="398"/>
    </location>
</feature>
<feature type="mutagenesis site" description="100-fold less binding." evidence="4">
    <original>C</original>
    <variation>S</variation>
    <location>
        <position position="563"/>
    </location>
</feature>
<feature type="mutagenesis site" description="100-fold less binding." evidence="4">
    <original>R</original>
    <variation>Q</variation>
    <location>
        <position position="579"/>
    </location>
</feature>
<feature type="mutagenesis site" description="100-fold less binding." evidence="4">
    <original>R</original>
    <variation>Q</variation>
    <location>
        <position position="582"/>
    </location>
</feature>
<feature type="mutagenesis site" description="10-fold less binding." evidence="4">
    <original>M</original>
    <variation>I</variation>
    <location>
        <position position="583"/>
    </location>
</feature>
<feature type="mutagenesis site" description="10-fold less binding." evidence="4">
    <original>R</original>
    <variation>Q</variation>
    <location>
        <position position="584"/>
    </location>
</feature>
<feature type="mutagenesis site" description="No binding." evidence="4">
    <original>GG</original>
    <variation>AA</variation>
    <location>
        <begin position="585"/>
        <end position="586"/>
    </location>
</feature>
<feature type="mutagenesis site" description="10-fold less reduced binding." evidence="4">
    <original>R</original>
    <variation>Q</variation>
    <location>
        <position position="587"/>
    </location>
</feature>
<feature type="mutagenesis site" description="No effect on binding." evidence="4">
    <original>K</original>
    <variation>Q</variation>
    <location>
        <position position="589"/>
    </location>
</feature>
<feature type="sequence conflict" description="In Ref. 1; AA sequence." evidence="10" ref="1">
    <original>Q</original>
    <variation>QQQ</variation>
    <location>
        <position position="45"/>
    </location>
</feature>
<feature type="sequence conflict" description="In Ref. 1; AAA28542." evidence="10" ref="1">
    <original>R</original>
    <variation>S</variation>
    <location>
        <position position="304"/>
    </location>
</feature>
<feature type="sequence conflict" description="In Ref. 1; AAA28542 and 2; AAA28915." evidence="10" ref="1 2">
    <original>GN</original>
    <variation>DS</variation>
    <location>
        <begin position="752"/>
        <end position="753"/>
    </location>
</feature>
<feature type="sequence conflict" description="In Ref. 1; AAA28542 and 2; AAA28915." evidence="10" ref="1 2">
    <original>L</original>
    <variation>LL</variation>
    <location>
        <position position="832"/>
    </location>
</feature>
<feature type="sequence conflict" description="In Ref. 1; AAA28542 and 2; AAA28915." evidence="10" ref="1 2">
    <original>L</original>
    <variation>P</variation>
    <location>
        <position position="912"/>
    </location>
</feature>
<feature type="helix" evidence="11">
    <location>
        <begin position="790"/>
        <end position="792"/>
    </location>
</feature>
<feature type="helix" evidence="11">
    <location>
        <begin position="795"/>
        <end position="802"/>
    </location>
</feature>
<feature type="helix" evidence="11">
    <location>
        <begin position="806"/>
        <end position="821"/>
    </location>
</feature>
<feature type="helix" evidence="11">
    <location>
        <begin position="829"/>
        <end position="849"/>
    </location>
</feature>
<feature type="helix" evidence="11">
    <location>
        <begin position="854"/>
        <end position="856"/>
    </location>
</feature>
<feature type="helix" evidence="11">
    <location>
        <begin position="859"/>
        <end position="884"/>
    </location>
</feature>
<feature type="strand" evidence="11">
    <location>
        <begin position="889"/>
        <end position="892"/>
    </location>
</feature>
<feature type="strand" evidence="11">
    <location>
        <begin position="894"/>
        <end position="896"/>
    </location>
</feature>
<feature type="strand" evidence="11">
    <location>
        <begin position="898"/>
        <end position="900"/>
    </location>
</feature>
<feature type="helix" evidence="11">
    <location>
        <begin position="901"/>
        <end position="905"/>
    </location>
</feature>
<feature type="turn" evidence="11">
    <location>
        <begin position="906"/>
        <end position="908"/>
    </location>
</feature>
<feature type="helix" evidence="11">
    <location>
        <begin position="910"/>
        <end position="912"/>
    </location>
</feature>
<feature type="helix" evidence="11">
    <location>
        <begin position="913"/>
        <end position="925"/>
    </location>
</feature>
<feature type="helix" evidence="11">
    <location>
        <begin position="930"/>
        <end position="941"/>
    </location>
</feature>
<feature type="helix" evidence="11">
    <location>
        <begin position="952"/>
        <end position="973"/>
    </location>
</feature>
<feature type="helix" evidence="11">
    <location>
        <begin position="980"/>
        <end position="1007"/>
    </location>
</feature>
<feature type="strand" evidence="11">
    <location>
        <begin position="1013"/>
        <end position="1015"/>
    </location>
</feature>
<feature type="helix" evidence="11">
    <location>
        <begin position="1016"/>
        <end position="1022"/>
    </location>
</feature>
<feature type="sequence conflict" description="In Ref. 2; AAA28915." evidence="10" ref="2">
    <original>NN</original>
    <variation>N</variation>
    <location sequence="P33244-2">
        <begin position="67"/>
        <end position="68"/>
    </location>
</feature>
<sequence>MDTFNVPMLAESSNTNYATEATSNHHHLQHQHQQQHSHQQQQQQQLLMPHHHKDQMLAAGSSPMLPFYSHLQLQQKDATATIGPAAAAAAVEAATTSANADNFSSLQTIDASQLDGGISLSGLCDRFFVASPNPHSNSNMTLMGTATAATTTTTNNNNNNNTNNNNNNNVEAKTVRPSNGNSVIIESVTMPSFANILFPTHRSANECIDPALLQKNPQNPNGNNSSIIVPPVEYHQLKPLEVNSSTSVSTSNFLSSTTAQLLDFEVQVGKDDGHISTTTTTGPGSGSASGSGSGSGSGSGSIARTIGTATPTTTTSMSNTANPTRSSLHSIEELAASSCAPRAASPNSNHTSSASTTPQQQQQQQHHMQSGNHSGSNLSSDDESMSEDEFGLEIDDNGGYQDTTSSHSQQSGGGGGGGGGNLLNGSSGGSSAGGGYMLLPQAASSSGNNGNPNAGHMSSGSVGNGSGGAGNGGAGGNSGPGNPMGGTSATPGHGGEVIDFKHLFEELCPVCGDKVSGYHYGLLTCESCKGFFKRTVQNKKVYTCVAERSCHIDKTQRKRCPYCRFQKCLEVGMKLEAVRADRMRGGRNKFGPMYKRDRARKLQVMRQRQLALQALRNSMGPDIKPTPISPGYQQAYPNMNIKQEIQIPQVSSLTQSPDSSPSPIAIALGQVNASTGGVIATPMNAGTGGSGGGGLNGPSSVGNGNSSNGSSNGNNNSSTGNGTSGGGGGNNAGGGGGGTNSNDGLHRNGGNGNSSCHEAGIGSLQNTADSKLCFDSGTHPSSTADALIEPLRVSPMIREFVQSIDDREWQTQLFALLQKQTYNQVEVDLFELMCKVLDQNLFSQVDWARNTVFFKDLKVDDQMKLLQHSWSDMLVLDHLHHRIHNGLPDETQLNNGQVFNLMSLGLLGVPQLGDYFNELQNKLQDLKFDMGDYVCMKFLILLNPSVRGIVNRKTVSEGHDNVQAALLDYTLTCYPSVNDKFRGLVNILPEIHAMAVRGEDHLYTKHCAGSAPTQTLLMEMLHAKRKG</sequence>
<keyword id="KW-0002">3D-structure</keyword>
<keyword id="KW-0010">Activator</keyword>
<keyword id="KW-0025">Alternative splicing</keyword>
<keyword id="KW-0903">Direct protein sequencing</keyword>
<keyword id="KW-0238">DNA-binding</keyword>
<keyword id="KW-0479">Metal-binding</keyword>
<keyword id="KW-0539">Nucleus</keyword>
<keyword id="KW-0675">Receptor</keyword>
<keyword id="KW-1185">Reference proteome</keyword>
<keyword id="KW-0804">Transcription</keyword>
<keyword id="KW-0805">Transcription regulation</keyword>
<keyword id="KW-0862">Zinc</keyword>
<keyword id="KW-0863">Zinc-finger</keyword>